<keyword id="KW-0489">Methyltransferase</keyword>
<keyword id="KW-1185">Reference proteome</keyword>
<keyword id="KW-0949">S-adenosyl-L-methionine</keyword>
<keyword id="KW-0808">Transferase</keyword>
<organism>
    <name type="scientific">Gibberella zeae (strain ATCC MYA-4620 / CBS 123657 / FGSC 9075 / NRRL 31084 / PH-1)</name>
    <name type="common">Wheat head blight fungus</name>
    <name type="synonym">Fusarium graminearum</name>
    <dbReference type="NCBI Taxonomy" id="229533"/>
    <lineage>
        <taxon>Eukaryota</taxon>
        <taxon>Fungi</taxon>
        <taxon>Dikarya</taxon>
        <taxon>Ascomycota</taxon>
        <taxon>Pezizomycotina</taxon>
        <taxon>Sordariomycetes</taxon>
        <taxon>Hypocreomycetidae</taxon>
        <taxon>Hypocreales</taxon>
        <taxon>Nectriaceae</taxon>
        <taxon>Fusarium</taxon>
    </lineage>
</organism>
<proteinExistence type="evidence at protein level"/>
<gene>
    <name evidence="2" type="primary">dpfgK</name>
    <name type="ORF">FG04589</name>
    <name type="ORF">FGRAMPH1_01T15649</name>
</gene>
<dbReference type="EC" id="2.1.1.-" evidence="1"/>
<dbReference type="EMBL" id="HG970333">
    <property type="protein sequence ID" value="CEF79624.1"/>
    <property type="molecule type" value="Genomic_DNA"/>
</dbReference>
<dbReference type="RefSeq" id="XP_011320992.1">
    <property type="nucleotide sequence ID" value="XM_011322690.1"/>
</dbReference>
<dbReference type="SMR" id="I1RL12"/>
<dbReference type="STRING" id="229533.I1RL12"/>
<dbReference type="KEGG" id="fgr:FGSG_04589"/>
<dbReference type="VEuPathDB" id="FungiDB:FGRAMPH1_01G15649"/>
<dbReference type="eggNOG" id="ENOG502RXVR">
    <property type="taxonomic scope" value="Eukaryota"/>
</dbReference>
<dbReference type="HOGENOM" id="CLU_069348_2_0_1"/>
<dbReference type="InParanoid" id="I1RL12"/>
<dbReference type="OrthoDB" id="7688at110618"/>
<dbReference type="UniPathway" id="UPA00213"/>
<dbReference type="Proteomes" id="UP000070720">
    <property type="component" value="Chromosome 2"/>
</dbReference>
<dbReference type="GO" id="GO:0008168">
    <property type="term" value="F:methyltransferase activity"/>
    <property type="evidence" value="ECO:0007669"/>
    <property type="project" value="UniProtKB-KW"/>
</dbReference>
<dbReference type="GO" id="GO:0032259">
    <property type="term" value="P:methylation"/>
    <property type="evidence" value="ECO:0007669"/>
    <property type="project" value="UniProtKB-KW"/>
</dbReference>
<dbReference type="GO" id="GO:0016114">
    <property type="term" value="P:terpenoid biosynthetic process"/>
    <property type="evidence" value="ECO:0007669"/>
    <property type="project" value="UniProtKB-UniPathway"/>
</dbReference>
<dbReference type="Gene3D" id="3.40.50.150">
    <property type="entry name" value="Vaccinia Virus protein VP39"/>
    <property type="match status" value="1"/>
</dbReference>
<dbReference type="InterPro" id="IPR007213">
    <property type="entry name" value="Ppm1/Ppm2/Tcmp"/>
</dbReference>
<dbReference type="InterPro" id="IPR029063">
    <property type="entry name" value="SAM-dependent_MTases_sf"/>
</dbReference>
<dbReference type="InterPro" id="IPR016874">
    <property type="entry name" value="TcmP-like"/>
</dbReference>
<dbReference type="PANTHER" id="PTHR43619">
    <property type="entry name" value="S-ADENOSYL-L-METHIONINE-DEPENDENT METHYLTRANSFERASE YKTD-RELATED"/>
    <property type="match status" value="1"/>
</dbReference>
<dbReference type="PANTHER" id="PTHR43619:SF2">
    <property type="entry name" value="S-ADENOSYL-L-METHIONINE-DEPENDENT METHYLTRANSFERASES SUPERFAMILY PROTEIN"/>
    <property type="match status" value="1"/>
</dbReference>
<dbReference type="Pfam" id="PF04072">
    <property type="entry name" value="LCM"/>
    <property type="match status" value="1"/>
</dbReference>
<dbReference type="PIRSF" id="PIRSF028177">
    <property type="entry name" value="Polyketide_synth_Omtfrase_TcmP"/>
    <property type="match status" value="1"/>
</dbReference>
<dbReference type="SUPFAM" id="SSF53335">
    <property type="entry name" value="S-adenosyl-L-methionine-dependent methyltransferases"/>
    <property type="match status" value="1"/>
</dbReference>
<feature type="chain" id="PRO_0000451558" description="S-adenosyl-L-methionine-dependent methyltransferase dpfgK">
    <location>
        <begin position="1"/>
        <end position="298"/>
    </location>
</feature>
<reference key="1">
    <citation type="journal article" date="2007" name="Science">
        <title>The Fusarium graminearum genome reveals a link between localized polymorphism and pathogen specialization.</title>
        <authorList>
            <person name="Cuomo C.A."/>
            <person name="Gueldener U."/>
            <person name="Xu J.-R."/>
            <person name="Trail F."/>
            <person name="Turgeon B.G."/>
            <person name="Di Pietro A."/>
            <person name="Walton J.D."/>
            <person name="Ma L.-J."/>
            <person name="Baker S.E."/>
            <person name="Rep M."/>
            <person name="Adam G."/>
            <person name="Antoniw J."/>
            <person name="Baldwin T."/>
            <person name="Calvo S.E."/>
            <person name="Chang Y.-L."/>
            <person name="DeCaprio D."/>
            <person name="Gale L.R."/>
            <person name="Gnerre S."/>
            <person name="Goswami R.S."/>
            <person name="Hammond-Kosack K."/>
            <person name="Harris L.J."/>
            <person name="Hilburn K."/>
            <person name="Kennell J.C."/>
            <person name="Kroken S."/>
            <person name="Magnuson J.K."/>
            <person name="Mannhaupt G."/>
            <person name="Mauceli E.W."/>
            <person name="Mewes H.-W."/>
            <person name="Mitterbauer R."/>
            <person name="Muehlbauer G."/>
            <person name="Muensterkoetter M."/>
            <person name="Nelson D."/>
            <person name="O'Donnell K."/>
            <person name="Ouellet T."/>
            <person name="Qi W."/>
            <person name="Quesneville H."/>
            <person name="Roncero M.I.G."/>
            <person name="Seong K.-Y."/>
            <person name="Tetko I.V."/>
            <person name="Urban M."/>
            <person name="Waalwijk C."/>
            <person name="Ward T.J."/>
            <person name="Yao J."/>
            <person name="Birren B.W."/>
            <person name="Kistler H.C."/>
        </authorList>
    </citation>
    <scope>NUCLEOTIDE SEQUENCE [LARGE SCALE GENOMIC DNA]</scope>
    <source>
        <strain>ATCC MYA-4620 / CBS 123657 / FGSC 9075 / NRRL 31084 / PH-1</strain>
    </source>
</reference>
<reference key="2">
    <citation type="journal article" date="2010" name="Nature">
        <title>Comparative genomics reveals mobile pathogenicity chromosomes in Fusarium.</title>
        <authorList>
            <person name="Ma L.-J."/>
            <person name="van der Does H.C."/>
            <person name="Borkovich K.A."/>
            <person name="Coleman J.J."/>
            <person name="Daboussi M.-J."/>
            <person name="Di Pietro A."/>
            <person name="Dufresne M."/>
            <person name="Freitag M."/>
            <person name="Grabherr M."/>
            <person name="Henrissat B."/>
            <person name="Houterman P.M."/>
            <person name="Kang S."/>
            <person name="Shim W.-B."/>
            <person name="Woloshuk C."/>
            <person name="Xie X."/>
            <person name="Xu J.-R."/>
            <person name="Antoniw J."/>
            <person name="Baker S.E."/>
            <person name="Bluhm B.H."/>
            <person name="Breakspear A."/>
            <person name="Brown D.W."/>
            <person name="Butchko R.A.E."/>
            <person name="Chapman S."/>
            <person name="Coulson R."/>
            <person name="Coutinho P.M."/>
            <person name="Danchin E.G.J."/>
            <person name="Diener A."/>
            <person name="Gale L.R."/>
            <person name="Gardiner D.M."/>
            <person name="Goff S."/>
            <person name="Hammond-Kosack K.E."/>
            <person name="Hilburn K."/>
            <person name="Hua-Van A."/>
            <person name="Jonkers W."/>
            <person name="Kazan K."/>
            <person name="Kodira C.D."/>
            <person name="Koehrsen M."/>
            <person name="Kumar L."/>
            <person name="Lee Y.-H."/>
            <person name="Li L."/>
            <person name="Manners J.M."/>
            <person name="Miranda-Saavedra D."/>
            <person name="Mukherjee M."/>
            <person name="Park G."/>
            <person name="Park J."/>
            <person name="Park S.-Y."/>
            <person name="Proctor R.H."/>
            <person name="Regev A."/>
            <person name="Ruiz-Roldan M.C."/>
            <person name="Sain D."/>
            <person name="Sakthikumar S."/>
            <person name="Sykes S."/>
            <person name="Schwartz D.C."/>
            <person name="Turgeon B.G."/>
            <person name="Wapinski I."/>
            <person name="Yoder O."/>
            <person name="Young S."/>
            <person name="Zeng Q."/>
            <person name="Zhou S."/>
            <person name="Galagan J."/>
            <person name="Cuomo C.A."/>
            <person name="Kistler H.C."/>
            <person name="Rep M."/>
        </authorList>
    </citation>
    <scope>GENOME REANNOTATION</scope>
    <source>
        <strain>ATCC MYA-4620 / CBS 123657 / FGSC 9075 / NRRL 31084 / PH-1</strain>
    </source>
</reference>
<reference key="3">
    <citation type="journal article" date="2015" name="BMC Genomics">
        <title>The completed genome sequence of the pathogenic ascomycete fungus Fusarium graminearum.</title>
        <authorList>
            <person name="King R."/>
            <person name="Urban M."/>
            <person name="Hammond-Kosack M.C.U."/>
            <person name="Hassani-Pak K."/>
            <person name="Hammond-Kosack K.E."/>
        </authorList>
    </citation>
    <scope>NUCLEOTIDE SEQUENCE [LARGE SCALE GENOMIC DNA]</scope>
    <source>
        <strain>ATCC MYA-4620 / CBS 123657 / FGSC 9075 / NRRL 31084 / PH-1</strain>
    </source>
</reference>
<reference key="4">
    <citation type="journal article" date="2020" name="Nat. Commun.">
        <title>Synthetic biology based construction of biological activity-related library of fungal decalin-containing diterpenoid pyrones.</title>
        <authorList>
            <person name="Tsukada K."/>
            <person name="Shinki S."/>
            <person name="Kaneko A."/>
            <person name="Murakami K."/>
            <person name="Irie K."/>
            <person name="Murai M."/>
            <person name="Miyoshi H."/>
            <person name="Dan S."/>
            <person name="Kawaji K."/>
            <person name="Hayashi H."/>
            <person name="Kodama E.N."/>
            <person name="Hori A."/>
            <person name="Salim E."/>
            <person name="Kuraishi T."/>
            <person name="Hirata N."/>
            <person name="Kanda Y."/>
            <person name="Asai T."/>
        </authorList>
    </citation>
    <scope>FUNCTION</scope>
    <scope>CATALYTIC ACTIVITY</scope>
    <scope>PATHWAY</scope>
    <scope>BIOTECHNOLOGY</scope>
</reference>
<accession>I1RL12</accession>
<accession>A0A098DL06</accession>
<sequence length="298" mass="34253">MSGSTLDKGKVTLTGAEETLLITLFARAKDAESPNPVLNDQYSAQVVSRIRDQGYNFSRTTLDRSDSSFFTSLVATRARVLDICCEQFLERNPGPATIIHLACGMDSRSLRLKWQGEGRLWIDADRQDVIKLRRQIMDEPAPERGEYRLTDPDIHDDAWLRDYNVPTDRPVLVLFEGLTPYLTRDEVVSLLRRITNHFRDSGVNGEIRFDAPGSISYFLINYVFNKPLRSMGTQFTWYMDDPRELETHVPGLKYRERMFVLHDYARLGNYGWLAGFLLRVADWFNIGGRIGSGYGYEF</sequence>
<protein>
    <recommendedName>
        <fullName evidence="2">S-adenosyl-L-methionine-dependent methyltransferase dpfgK</fullName>
        <ecNumber evidence="1">2.1.1.-</ecNumber>
    </recommendedName>
    <alternativeName>
        <fullName evidence="2">Diterpenoid pyrone biosynthesis cluster protein K</fullName>
    </alternativeName>
</protein>
<comment type="function">
    <text evidence="1 4">S-adenosyl-L-methionine-dependent methyltransferase; part of the gene cluster that mediates the biosynthesis of diterpenoid pyrones (PubMed:32286350). The first step of the pathway is the synthesis of the alpha-pyrone moiety by the polyketide synthase dpfgA via condensation of one acetyl-CoA starter unit with 3 malonyl-CoA units and 2 methylations (Probable). The alpha-pyrone is then combined with geranylgeranyl pyrophosphate (GGPP) formed by the GGPP synthase dpfgD through the action of the prenyltransferase dpfgC to yield a linear alpha-pyrone diterpenoid (Probable). Subsequent steps in the diterpenoid pyrone biosynthetic pathway involve the decalin core formation, which is initiated by the epoxidation of the C10-C11 olefin by the FAD-dependent oxidoreductase dpfgE, and is followed by a cyclization cascade catalyzed by the terpene cyclase dpfgB (Probable). The short chain dehydrogenase/reductase dpfgG then oxidizes the 8S hydroxy group to a ketone and the short chain dehydrogenase/reductase dpfgH reduces the ketone to the 8R hydroxy group to yield higginsianin B (PubMed:32286350). Higginsianin B is further methylated by the methyltransferase dpfgI to produce the intermediate named FDDP B (PubMed:32286350). The cytochrome P450 monooxygenase dfgpJ then catalyzes a three-step oxidation at C-27 to generate a carboxylic acid as well as C-26 hydroxylation (PubMed:32286350). Finally, methyltransferase dpfgK methylates the carboxylic acid generated by dpfgJ, yielding the final diterpenoid pyrones from the pathway which were named FDDP D and FDDP E (PubMed:32286350).</text>
</comment>
<comment type="pathway">
    <text evidence="1">Secondary metabolite biosynthesis; terpenoid biosynthesis.</text>
</comment>
<comment type="biotechnology">
    <text evidence="1">Diterpenoid pyrones display various biological activities and FDDP E shows anti-HIV activity (PubMed:32286350). FDDP D and FDDP E show also inhibitory activity of 42-mer-amyloid beta aggregation that is involved in the pathogenesis of Alzheimer's disease (PubMed:32286350).</text>
</comment>
<comment type="similarity">
    <text evidence="3">Belongs to the methyltransferase superfamily.</text>
</comment>
<evidence type="ECO:0000269" key="1">
    <source>
    </source>
</evidence>
<evidence type="ECO:0000303" key="2">
    <source>
    </source>
</evidence>
<evidence type="ECO:0000305" key="3"/>
<evidence type="ECO:0000305" key="4">
    <source>
    </source>
</evidence>
<name>DPFGK_GIBZE</name>